<sequence length="663" mass="74214">MNGKLYHGACFYPELWDEDVLDEDIRMMERIGINVVRIGEFAWSRMEPEKGRIDVGFFADVIRKLRDNKIETVMCTPTATPPIWLTHGHPERMHVNEKGETMGHGSRQHACTNHPYFRERARLIIKHIAKEIGELPGLIGWQLDNEFKCHVAECICETCRTLWHKWLEDRYQTIDRLNEAWGTGVWSETYQCFEQVPQPGPTPFLHNSSLRTMYQLFSMDKISEFAREQAEVIRAYSDAPITHNSSVMFGVDHEDLFKSLDFASFDTYASQENSQAFLFNCDLWRNIKKGRPFWIMETSPSYSASLESYAAPHQNGYLKAEAVSSYALGGAAFCYWLWRQQRAGSEQPHGSVLSAWGEPDVGYENVLEAERARREVEHIMLATAPLQAETAVVYSDRAKVFLKTEPHRGLHYRTLITEFYDRLLKMGIHRDVILEGSPLDGYKLLFTPFIHYLPPAFIKKAEAFAQSGGIWIAGPLTGGRTEHHTIHTDCGLGPLEKCSGVKTLFTFPMDERNSSGTAFGVKAPLSLWSAVFEAGGTKAVGMIEKGPASGKAFITEHKCGKGKIVMLGSMPAGEAGDIMMKKLISHYAEEAGVEQKTDVTPGTVVAPRKGADGLVWVVINMDGKGGAVTLDGNGTDLLSGRPVTGRVTLGPHDYRVILLSENK</sequence>
<feature type="chain" id="PRO_0000367025" description="Beta-galactosidase YesZ">
    <location>
        <begin position="1"/>
        <end position="663"/>
    </location>
</feature>
<feature type="active site" description="Proton donor" evidence="1">
    <location>
        <position position="146"/>
    </location>
</feature>
<feature type="active site" description="Nucleophile" evidence="1">
    <location>
        <position position="297"/>
    </location>
</feature>
<feature type="binding site" evidence="1">
    <location>
        <position position="107"/>
    </location>
    <ligand>
        <name>substrate</name>
    </ligand>
</feature>
<feature type="binding site" evidence="1">
    <location>
        <position position="111"/>
    </location>
    <ligand>
        <name>Zn(2+)</name>
        <dbReference type="ChEBI" id="CHEBI:29105"/>
    </ligand>
</feature>
<feature type="binding site" evidence="1">
    <location>
        <position position="145"/>
    </location>
    <ligand>
        <name>substrate</name>
    </ligand>
</feature>
<feature type="binding site" evidence="1">
    <location>
        <position position="154"/>
    </location>
    <ligand>
        <name>Zn(2+)</name>
        <dbReference type="ChEBI" id="CHEBI:29105"/>
    </ligand>
</feature>
<feature type="binding site" evidence="1">
    <location>
        <position position="156"/>
    </location>
    <ligand>
        <name>Zn(2+)</name>
        <dbReference type="ChEBI" id="CHEBI:29105"/>
    </ligand>
</feature>
<feature type="binding site" evidence="1">
    <location>
        <position position="159"/>
    </location>
    <ligand>
        <name>Zn(2+)</name>
        <dbReference type="ChEBI" id="CHEBI:29105"/>
    </ligand>
</feature>
<feature type="binding site" evidence="1">
    <location>
        <begin position="346"/>
        <end position="349"/>
    </location>
    <ligand>
        <name>substrate</name>
    </ligand>
</feature>
<accession>Q65KX8</accession>
<accession>Q62WC5</accession>
<reference key="1">
    <citation type="journal article" date="2004" name="J. Mol. Microbiol. Biotechnol.">
        <title>The complete genome sequence of Bacillus licheniformis DSM13, an organism with great industrial potential.</title>
        <authorList>
            <person name="Veith B."/>
            <person name="Herzberg C."/>
            <person name="Steckel S."/>
            <person name="Feesche J."/>
            <person name="Maurer K.H."/>
            <person name="Ehrenreich P."/>
            <person name="Baeumer S."/>
            <person name="Henne A."/>
            <person name="Liesegang H."/>
            <person name="Merkl R."/>
            <person name="Ehrenreich A."/>
            <person name="Gottschalk G."/>
        </authorList>
    </citation>
    <scope>NUCLEOTIDE SEQUENCE [LARGE SCALE GENOMIC DNA]</scope>
    <source>
        <strain>ATCC 14580 / DSM 13 / JCM 2505 / CCUG 7422 / NBRC 12200 / NCIMB 9375 / NCTC 10341 / NRRL NRS-1264 / Gibson 46</strain>
    </source>
</reference>
<reference key="2">
    <citation type="journal article" date="2004" name="Genome Biol.">
        <title>Complete genome sequence of the industrial bacterium Bacillus licheniformis and comparisons with closely related Bacillus species.</title>
        <authorList>
            <person name="Rey M.W."/>
            <person name="Ramaiya P."/>
            <person name="Nelson B.A."/>
            <person name="Brody-Karpin S.D."/>
            <person name="Zaretsky E.J."/>
            <person name="Tang M."/>
            <person name="Lopez de Leon A."/>
            <person name="Xiang H."/>
            <person name="Gusti V."/>
            <person name="Clausen I.G."/>
            <person name="Olsen P.B."/>
            <person name="Rasmussen M.D."/>
            <person name="Andersen J.T."/>
            <person name="Joergensen P.L."/>
            <person name="Larsen T.S."/>
            <person name="Sorokin A."/>
            <person name="Bolotin A."/>
            <person name="Lapidus A."/>
            <person name="Galleron N."/>
            <person name="Ehrlich S.D."/>
            <person name="Berka R.M."/>
        </authorList>
    </citation>
    <scope>NUCLEOTIDE SEQUENCE [LARGE SCALE GENOMIC DNA]</scope>
    <source>
        <strain>ATCC 14580 / DSM 13 / JCM 2505 / CCUG 7422 / NBRC 12200 / NCIMB 9375 / NCTC 10341 / NRRL NRS-1264 / Gibson 46</strain>
    </source>
</reference>
<evidence type="ECO:0000250" key="1"/>
<evidence type="ECO:0000305" key="2"/>
<protein>
    <recommendedName>
        <fullName>Beta-galactosidase YesZ</fullName>
        <shortName>Beta-gal</shortName>
        <ecNumber>3.2.1.23</ecNumber>
    </recommendedName>
    <alternativeName>
        <fullName>Probable rhamnogalacturonan beta-galactosidase</fullName>
    </alternativeName>
</protein>
<name>BGAL1_BACLD</name>
<keyword id="KW-0326">Glycosidase</keyword>
<keyword id="KW-0378">Hydrolase</keyword>
<keyword id="KW-0479">Metal-binding</keyword>
<keyword id="KW-1185">Reference proteome</keyword>
<keyword id="KW-0862">Zinc</keyword>
<organism>
    <name type="scientific">Bacillus licheniformis (strain ATCC 14580 / DSM 13 / JCM 2505 / CCUG 7422 / NBRC 12200 / NCIMB 9375 / NCTC 10341 / NRRL NRS-1264 / Gibson 46)</name>
    <dbReference type="NCBI Taxonomy" id="279010"/>
    <lineage>
        <taxon>Bacteria</taxon>
        <taxon>Bacillati</taxon>
        <taxon>Bacillota</taxon>
        <taxon>Bacilli</taxon>
        <taxon>Bacillales</taxon>
        <taxon>Bacillaceae</taxon>
        <taxon>Bacillus</taxon>
    </lineage>
</organism>
<comment type="function">
    <text evidence="1">May play a role in the degradation of rhamnogalacturonan derived from plant cell walls.</text>
</comment>
<comment type="catalytic activity">
    <reaction>
        <text>Hydrolysis of terminal non-reducing beta-D-galactose residues in beta-D-galactosides.</text>
        <dbReference type="EC" id="3.2.1.23"/>
    </reaction>
</comment>
<comment type="subunit">
    <text evidence="1">Homotrimer.</text>
</comment>
<comment type="similarity">
    <text evidence="2">Belongs to the glycosyl hydrolase 42 family.</text>
</comment>
<proteinExistence type="inferred from homology"/>
<gene>
    <name type="primary">yesZ</name>
    <name type="ordered locus">BLi01382</name>
    <name type="ordered locus">BL03780</name>
</gene>
<dbReference type="EC" id="3.2.1.23"/>
<dbReference type="EMBL" id="AE017333">
    <property type="protein sequence ID" value="AAU40286.1"/>
    <property type="molecule type" value="Genomic_DNA"/>
</dbReference>
<dbReference type="EMBL" id="CP000002">
    <property type="protein sequence ID" value="AAU22933.1"/>
    <property type="molecule type" value="Genomic_DNA"/>
</dbReference>
<dbReference type="SMR" id="Q65KX8"/>
<dbReference type="STRING" id="279010.BL03780"/>
<dbReference type="CAZy" id="GH42">
    <property type="family name" value="Glycoside Hydrolase Family 42"/>
</dbReference>
<dbReference type="KEGG" id="bld:BLi01382"/>
<dbReference type="KEGG" id="bli:BL03780"/>
<dbReference type="eggNOG" id="COG1874">
    <property type="taxonomic scope" value="Bacteria"/>
</dbReference>
<dbReference type="HOGENOM" id="CLU_012430_1_0_9"/>
<dbReference type="Proteomes" id="UP000000606">
    <property type="component" value="Chromosome"/>
</dbReference>
<dbReference type="GO" id="GO:0009341">
    <property type="term" value="C:beta-galactosidase complex"/>
    <property type="evidence" value="ECO:0007669"/>
    <property type="project" value="InterPro"/>
</dbReference>
<dbReference type="GO" id="GO:0004565">
    <property type="term" value="F:beta-galactosidase activity"/>
    <property type="evidence" value="ECO:0007669"/>
    <property type="project" value="UniProtKB-EC"/>
</dbReference>
<dbReference type="GO" id="GO:0046872">
    <property type="term" value="F:metal ion binding"/>
    <property type="evidence" value="ECO:0007669"/>
    <property type="project" value="UniProtKB-KW"/>
</dbReference>
<dbReference type="GO" id="GO:0006012">
    <property type="term" value="P:galactose metabolic process"/>
    <property type="evidence" value="ECO:0007669"/>
    <property type="project" value="InterPro"/>
</dbReference>
<dbReference type="CDD" id="cd03143">
    <property type="entry name" value="A4_beta-galactosidase_middle_domain"/>
    <property type="match status" value="1"/>
</dbReference>
<dbReference type="Gene3D" id="3.40.50.880">
    <property type="match status" value="1"/>
</dbReference>
<dbReference type="Gene3D" id="3.20.20.80">
    <property type="entry name" value="Glycosidases"/>
    <property type="match status" value="1"/>
</dbReference>
<dbReference type="Gene3D" id="2.60.40.1180">
    <property type="entry name" value="Golgi alpha-mannosidase II"/>
    <property type="match status" value="1"/>
</dbReference>
<dbReference type="InterPro" id="IPR013739">
    <property type="entry name" value="Beta_galactosidase_C"/>
</dbReference>
<dbReference type="InterPro" id="IPR013738">
    <property type="entry name" value="Beta_galactosidase_Trimer"/>
</dbReference>
<dbReference type="InterPro" id="IPR029062">
    <property type="entry name" value="Class_I_gatase-like"/>
</dbReference>
<dbReference type="InterPro" id="IPR003476">
    <property type="entry name" value="Glyco_hydro_42"/>
</dbReference>
<dbReference type="InterPro" id="IPR013529">
    <property type="entry name" value="Glyco_hydro_42_N"/>
</dbReference>
<dbReference type="InterPro" id="IPR013780">
    <property type="entry name" value="Glyco_hydro_b"/>
</dbReference>
<dbReference type="InterPro" id="IPR017853">
    <property type="entry name" value="Glycoside_hydrolase_SF"/>
</dbReference>
<dbReference type="PANTHER" id="PTHR36447">
    <property type="entry name" value="BETA-GALACTOSIDASE GANA"/>
    <property type="match status" value="1"/>
</dbReference>
<dbReference type="PANTHER" id="PTHR36447:SF2">
    <property type="entry name" value="BETA-GALACTOSIDASE YESZ"/>
    <property type="match status" value="1"/>
</dbReference>
<dbReference type="Pfam" id="PF02449">
    <property type="entry name" value="Glyco_hydro_42"/>
    <property type="match status" value="1"/>
</dbReference>
<dbReference type="Pfam" id="PF08533">
    <property type="entry name" value="Glyco_hydro_42C"/>
    <property type="match status" value="1"/>
</dbReference>
<dbReference type="Pfam" id="PF08532">
    <property type="entry name" value="Glyco_hydro_42M"/>
    <property type="match status" value="1"/>
</dbReference>
<dbReference type="PIRSF" id="PIRSF001084">
    <property type="entry name" value="B-galactosidase"/>
    <property type="match status" value="1"/>
</dbReference>
<dbReference type="SUPFAM" id="SSF51445">
    <property type="entry name" value="(Trans)glycosidases"/>
    <property type="match status" value="1"/>
</dbReference>
<dbReference type="SUPFAM" id="SSF52317">
    <property type="entry name" value="Class I glutamine amidotransferase-like"/>
    <property type="match status" value="1"/>
</dbReference>